<accession>O26327</accession>
<protein>
    <recommendedName>
        <fullName>Histidinol dehydrogenase</fullName>
        <shortName>HDH</shortName>
        <ecNumber>1.1.1.23</ecNumber>
    </recommendedName>
</protein>
<dbReference type="EC" id="1.1.1.23"/>
<dbReference type="EMBL" id="AE000666">
    <property type="protein sequence ID" value="AAB84731.1"/>
    <property type="molecule type" value="Genomic_DNA"/>
</dbReference>
<dbReference type="PIR" id="H69127">
    <property type="entry name" value="H69127"/>
</dbReference>
<dbReference type="SMR" id="O26327"/>
<dbReference type="FunCoup" id="O26327">
    <property type="interactions" value="194"/>
</dbReference>
<dbReference type="STRING" id="187420.MTH_225"/>
<dbReference type="PaxDb" id="187420-MTH_225"/>
<dbReference type="EnsemblBacteria" id="AAB84731">
    <property type="protein sequence ID" value="AAB84731"/>
    <property type="gene ID" value="MTH_225"/>
</dbReference>
<dbReference type="KEGG" id="mth:MTH_225"/>
<dbReference type="PATRIC" id="fig|187420.15.peg.194"/>
<dbReference type="HOGENOM" id="CLU_006732_3_0_2"/>
<dbReference type="InParanoid" id="O26327"/>
<dbReference type="UniPathway" id="UPA00031">
    <property type="reaction ID" value="UER00014"/>
</dbReference>
<dbReference type="Proteomes" id="UP000005223">
    <property type="component" value="Chromosome"/>
</dbReference>
<dbReference type="GO" id="GO:0005737">
    <property type="term" value="C:cytoplasm"/>
    <property type="evidence" value="ECO:0007669"/>
    <property type="project" value="TreeGrafter"/>
</dbReference>
<dbReference type="GO" id="GO:0004399">
    <property type="term" value="F:histidinol dehydrogenase activity"/>
    <property type="evidence" value="ECO:0007669"/>
    <property type="project" value="UniProtKB-UniRule"/>
</dbReference>
<dbReference type="GO" id="GO:0051287">
    <property type="term" value="F:NAD binding"/>
    <property type="evidence" value="ECO:0007669"/>
    <property type="project" value="InterPro"/>
</dbReference>
<dbReference type="GO" id="GO:0008270">
    <property type="term" value="F:zinc ion binding"/>
    <property type="evidence" value="ECO:0007669"/>
    <property type="project" value="UniProtKB-UniRule"/>
</dbReference>
<dbReference type="GO" id="GO:0000105">
    <property type="term" value="P:L-histidine biosynthetic process"/>
    <property type="evidence" value="ECO:0007669"/>
    <property type="project" value="UniProtKB-UniRule"/>
</dbReference>
<dbReference type="CDD" id="cd06572">
    <property type="entry name" value="Histidinol_dh"/>
    <property type="match status" value="1"/>
</dbReference>
<dbReference type="FunFam" id="3.40.50.1980:FF:000001">
    <property type="entry name" value="Histidinol dehydrogenase"/>
    <property type="match status" value="1"/>
</dbReference>
<dbReference type="FunFam" id="3.40.50.1980:FF:000026">
    <property type="entry name" value="Histidinol dehydrogenase"/>
    <property type="match status" value="1"/>
</dbReference>
<dbReference type="Gene3D" id="1.20.5.1300">
    <property type="match status" value="1"/>
</dbReference>
<dbReference type="Gene3D" id="3.40.50.1980">
    <property type="entry name" value="Nitrogenase molybdenum iron protein domain"/>
    <property type="match status" value="2"/>
</dbReference>
<dbReference type="HAMAP" id="MF_01024">
    <property type="entry name" value="HisD"/>
    <property type="match status" value="1"/>
</dbReference>
<dbReference type="InterPro" id="IPR016161">
    <property type="entry name" value="Ald_DH/histidinol_DH"/>
</dbReference>
<dbReference type="InterPro" id="IPR001692">
    <property type="entry name" value="Histidinol_DH_CS"/>
</dbReference>
<dbReference type="InterPro" id="IPR022695">
    <property type="entry name" value="Histidinol_DH_monofunct"/>
</dbReference>
<dbReference type="InterPro" id="IPR012131">
    <property type="entry name" value="Hstdl_DH"/>
</dbReference>
<dbReference type="NCBIfam" id="TIGR00069">
    <property type="entry name" value="hisD"/>
    <property type="match status" value="1"/>
</dbReference>
<dbReference type="PANTHER" id="PTHR21256:SF2">
    <property type="entry name" value="HISTIDINE BIOSYNTHESIS TRIFUNCTIONAL PROTEIN"/>
    <property type="match status" value="1"/>
</dbReference>
<dbReference type="PANTHER" id="PTHR21256">
    <property type="entry name" value="HISTIDINOL DEHYDROGENASE HDH"/>
    <property type="match status" value="1"/>
</dbReference>
<dbReference type="Pfam" id="PF00815">
    <property type="entry name" value="Histidinol_dh"/>
    <property type="match status" value="1"/>
</dbReference>
<dbReference type="PIRSF" id="PIRSF000099">
    <property type="entry name" value="Histidinol_dh"/>
    <property type="match status" value="1"/>
</dbReference>
<dbReference type="PRINTS" id="PR00083">
    <property type="entry name" value="HOLDHDRGNASE"/>
</dbReference>
<dbReference type="SUPFAM" id="SSF53720">
    <property type="entry name" value="ALDH-like"/>
    <property type="match status" value="1"/>
</dbReference>
<dbReference type="PROSITE" id="PS00611">
    <property type="entry name" value="HISOL_DEHYDROGENASE"/>
    <property type="match status" value="1"/>
</dbReference>
<organism>
    <name type="scientific">Methanothermobacter thermautotrophicus (strain ATCC 29096 / DSM 1053 / JCM 10044 / NBRC 100330 / Delta H)</name>
    <name type="common">Methanobacterium thermoautotrophicum</name>
    <dbReference type="NCBI Taxonomy" id="187420"/>
    <lineage>
        <taxon>Archaea</taxon>
        <taxon>Methanobacteriati</taxon>
        <taxon>Methanobacteriota</taxon>
        <taxon>Methanomada group</taxon>
        <taxon>Methanobacteria</taxon>
        <taxon>Methanobacteriales</taxon>
        <taxon>Methanobacteriaceae</taxon>
        <taxon>Methanothermobacter</taxon>
    </lineage>
</organism>
<feature type="chain" id="PRO_0000135899" description="Histidinol dehydrogenase">
    <location>
        <begin position="1"/>
        <end position="426"/>
    </location>
</feature>
<feature type="active site" description="Proton acceptor" evidence="1">
    <location>
        <position position="323"/>
    </location>
</feature>
<feature type="active site" description="Proton acceptor" evidence="1">
    <location>
        <position position="324"/>
    </location>
</feature>
<feature type="binding site" evidence="1">
    <location>
        <position position="125"/>
    </location>
    <ligand>
        <name>NAD(+)</name>
        <dbReference type="ChEBI" id="CHEBI:57540"/>
    </ligand>
</feature>
<feature type="binding site" evidence="1">
    <location>
        <position position="187"/>
    </location>
    <ligand>
        <name>NAD(+)</name>
        <dbReference type="ChEBI" id="CHEBI:57540"/>
    </ligand>
</feature>
<feature type="binding site" evidence="1">
    <location>
        <position position="210"/>
    </location>
    <ligand>
        <name>NAD(+)</name>
        <dbReference type="ChEBI" id="CHEBI:57540"/>
    </ligand>
</feature>
<feature type="binding site" evidence="1">
    <location>
        <position position="233"/>
    </location>
    <ligand>
        <name>substrate</name>
    </ligand>
</feature>
<feature type="binding site" evidence="1">
    <location>
        <position position="255"/>
    </location>
    <ligand>
        <name>substrate</name>
    </ligand>
</feature>
<feature type="binding site" evidence="1">
    <location>
        <position position="255"/>
    </location>
    <ligand>
        <name>Zn(2+)</name>
        <dbReference type="ChEBI" id="CHEBI:29105"/>
    </ligand>
</feature>
<feature type="binding site" evidence="1">
    <location>
        <position position="258"/>
    </location>
    <ligand>
        <name>substrate</name>
    </ligand>
</feature>
<feature type="binding site" evidence="1">
    <location>
        <position position="258"/>
    </location>
    <ligand>
        <name>Zn(2+)</name>
        <dbReference type="ChEBI" id="CHEBI:29105"/>
    </ligand>
</feature>
<feature type="binding site" evidence="1">
    <location>
        <position position="324"/>
    </location>
    <ligand>
        <name>substrate</name>
    </ligand>
</feature>
<feature type="binding site" evidence="1">
    <location>
        <position position="357"/>
    </location>
    <ligand>
        <name>substrate</name>
    </ligand>
</feature>
<feature type="binding site" evidence="1">
    <location>
        <position position="357"/>
    </location>
    <ligand>
        <name>Zn(2+)</name>
        <dbReference type="ChEBI" id="CHEBI:29105"/>
    </ligand>
</feature>
<feature type="binding site" evidence="1">
    <location>
        <position position="411"/>
    </location>
    <ligand>
        <name>substrate</name>
    </ligand>
</feature>
<feature type="binding site" evidence="1">
    <location>
        <position position="416"/>
    </location>
    <ligand>
        <name>substrate</name>
    </ligand>
</feature>
<feature type="binding site" evidence="1">
    <location>
        <position position="416"/>
    </location>
    <ligand>
        <name>Zn(2+)</name>
        <dbReference type="ChEBI" id="CHEBI:29105"/>
    </ligand>
</feature>
<gene>
    <name type="primary">hisD</name>
    <name type="ordered locus">MTH_225</name>
</gene>
<proteinExistence type="inferred from homology"/>
<keyword id="KW-0028">Amino-acid biosynthesis</keyword>
<keyword id="KW-0368">Histidine biosynthesis</keyword>
<keyword id="KW-0479">Metal-binding</keyword>
<keyword id="KW-0520">NAD</keyword>
<keyword id="KW-0560">Oxidoreductase</keyword>
<keyword id="KW-1185">Reference proteome</keyword>
<keyword id="KW-0862">Zinc</keyword>
<sequence>MLMKITEFDYRRISELVERARLDVDDVLGPVADIISMVRDGGDDALRELTGRFDGVTVENFRVSREEIEEAHKNLEPGVKEALREAASNIEEFHRMQMPSGWMSEVRPGVMAGQLVRPIDSVGCYIPGGRAVYPSTILMTVIPARIAGVERIVCCTPPAQDGSVPDAVLVAADMAGASEIYRVGGAQAVAAMAYGTETIRPVDKIVGPGNIFVTAAKKLVYGEVDIDFPAGPSEVLIIADETASPEYIALEILAQAEHDPQAASVLVTDSRDLALEVKEMVHENIKYMERANIIRESLERYGMIVLTADIDEAVDFSNAYAPEHLVIMTDSPEETLEGIRNAGSIFLGELSPVAAGDYGSGTNHVLPTSGCARMYSGLSTESFIKKPTVQRITKEGLRNLQGTVLKLAEYEGLHAHAESFRRRLRD</sequence>
<name>HISX_METTH</name>
<reference key="1">
    <citation type="journal article" date="1997" name="J. Bacteriol.">
        <title>Complete genome sequence of Methanobacterium thermoautotrophicum deltaH: functional analysis and comparative genomics.</title>
        <authorList>
            <person name="Smith D.R."/>
            <person name="Doucette-Stamm L.A."/>
            <person name="Deloughery C."/>
            <person name="Lee H.-M."/>
            <person name="Dubois J."/>
            <person name="Aldredge T."/>
            <person name="Bashirzadeh R."/>
            <person name="Blakely D."/>
            <person name="Cook R."/>
            <person name="Gilbert K."/>
            <person name="Harrison D."/>
            <person name="Hoang L."/>
            <person name="Keagle P."/>
            <person name="Lumm W."/>
            <person name="Pothier B."/>
            <person name="Qiu D."/>
            <person name="Spadafora R."/>
            <person name="Vicare R."/>
            <person name="Wang Y."/>
            <person name="Wierzbowski J."/>
            <person name="Gibson R."/>
            <person name="Jiwani N."/>
            <person name="Caruso A."/>
            <person name="Bush D."/>
            <person name="Safer H."/>
            <person name="Patwell D."/>
            <person name="Prabhakar S."/>
            <person name="McDougall S."/>
            <person name="Shimer G."/>
            <person name="Goyal A."/>
            <person name="Pietrovski S."/>
            <person name="Church G.M."/>
            <person name="Daniels C.J."/>
            <person name="Mao J.-I."/>
            <person name="Rice P."/>
            <person name="Noelling J."/>
            <person name="Reeve J.N."/>
        </authorList>
    </citation>
    <scope>NUCLEOTIDE SEQUENCE [LARGE SCALE GENOMIC DNA]</scope>
    <source>
        <strain>ATCC 29096 / DSM 1053 / JCM 10044 / NBRC 100330 / Delta H</strain>
    </source>
</reference>
<evidence type="ECO:0000250" key="1"/>
<evidence type="ECO:0000305" key="2"/>
<comment type="function">
    <text evidence="1">Catalyzes the sequential NAD-dependent oxidations of L-histidinol to L-histidinaldehyde and then to L-histidine.</text>
</comment>
<comment type="catalytic activity">
    <reaction>
        <text>L-histidinol + 2 NAD(+) + H2O = L-histidine + 2 NADH + 3 H(+)</text>
        <dbReference type="Rhea" id="RHEA:20641"/>
        <dbReference type="ChEBI" id="CHEBI:15377"/>
        <dbReference type="ChEBI" id="CHEBI:15378"/>
        <dbReference type="ChEBI" id="CHEBI:57540"/>
        <dbReference type="ChEBI" id="CHEBI:57595"/>
        <dbReference type="ChEBI" id="CHEBI:57699"/>
        <dbReference type="ChEBI" id="CHEBI:57945"/>
        <dbReference type="EC" id="1.1.1.23"/>
    </reaction>
</comment>
<comment type="cofactor">
    <cofactor evidence="1">
        <name>Zn(2+)</name>
        <dbReference type="ChEBI" id="CHEBI:29105"/>
    </cofactor>
    <text evidence="1">Binds 1 zinc ion per subunit.</text>
</comment>
<comment type="pathway">
    <text>Amino-acid biosynthesis; L-histidine biosynthesis; L-histidine from 5-phospho-alpha-D-ribose 1-diphosphate: step 9/9.</text>
</comment>
<comment type="similarity">
    <text evidence="2">Belongs to the histidinol dehydrogenase family.</text>
</comment>